<gene>
    <name evidence="1" type="primary">luxD</name>
    <name type="ordered locus">VFMJ11_A1040</name>
</gene>
<sequence length="307" mass="34400">MKDESALFTIDHIIKLDNGQSIRVWETLPKKNVPEKKNTILIASGFARRMDHFAGLAEYLSTNGFHVIRYDSLHHVGLSSGCINEFTMSIGKNSLLTVVDWLTDHGVERIGLIAASLSARIAYEVVNKIKLSFLITAVGVVNLRDTLEKALEYDYLQLPISELPEDLDFEGHNLGSEVFVTDCFKHDWDTLDSTLNSVKGLAIPFIAFTANDDSWVKQSEVIELIDSIESSNCKLYSLIGSSHDLGENLVVLRNFYQSVTKAALALDDGLLDLEIDIIEPRFEDVTSITVKERRLKNEIENELLELA</sequence>
<dbReference type="EC" id="2.3.1.-" evidence="1"/>
<dbReference type="EMBL" id="CP001133">
    <property type="protein sequence ID" value="ACH64605.1"/>
    <property type="molecule type" value="Genomic_DNA"/>
</dbReference>
<dbReference type="RefSeq" id="WP_012535652.1">
    <property type="nucleotide sequence ID" value="NC_011186.1"/>
</dbReference>
<dbReference type="SMR" id="B5EV70"/>
<dbReference type="ESTHER" id="vibfi-LUXD">
    <property type="family name" value="Thioesterase_acyl-transferase"/>
</dbReference>
<dbReference type="KEGG" id="vfm:VFMJ11_A1040"/>
<dbReference type="HOGENOM" id="CLU_882365_0_0_6"/>
<dbReference type="UniPathway" id="UPA00569"/>
<dbReference type="Proteomes" id="UP000001857">
    <property type="component" value="Chromosome II"/>
</dbReference>
<dbReference type="GO" id="GO:0016747">
    <property type="term" value="F:acyltransferase activity, transferring groups other than amino-acyl groups"/>
    <property type="evidence" value="ECO:0007669"/>
    <property type="project" value="UniProtKB-UniRule"/>
</dbReference>
<dbReference type="GO" id="GO:0008218">
    <property type="term" value="P:bioluminescence"/>
    <property type="evidence" value="ECO:0007669"/>
    <property type="project" value="UniProtKB-UniRule"/>
</dbReference>
<dbReference type="GO" id="GO:0006631">
    <property type="term" value="P:fatty acid metabolic process"/>
    <property type="evidence" value="ECO:0007669"/>
    <property type="project" value="InterPro"/>
</dbReference>
<dbReference type="Gene3D" id="3.40.50.1820">
    <property type="entry name" value="alpha/beta hydrolase"/>
    <property type="match status" value="1"/>
</dbReference>
<dbReference type="HAMAP" id="MF_00774">
    <property type="entry name" value="LuxD"/>
    <property type="match status" value="1"/>
</dbReference>
<dbReference type="InterPro" id="IPR029058">
    <property type="entry name" value="AB_hydrolase_fold"/>
</dbReference>
<dbReference type="InterPro" id="IPR003157">
    <property type="entry name" value="LuxD"/>
</dbReference>
<dbReference type="NCBIfam" id="NF010127">
    <property type="entry name" value="PRK13604.1"/>
    <property type="match status" value="1"/>
</dbReference>
<dbReference type="Pfam" id="PF02273">
    <property type="entry name" value="Acyl_transf_2"/>
    <property type="match status" value="1"/>
</dbReference>
<dbReference type="PIRSF" id="PIRSF009416">
    <property type="entry name" value="LuxD"/>
    <property type="match status" value="1"/>
</dbReference>
<dbReference type="SUPFAM" id="SSF53474">
    <property type="entry name" value="alpha/beta-Hydrolases"/>
    <property type="match status" value="1"/>
</dbReference>
<reference key="1">
    <citation type="submission" date="2008-08" db="EMBL/GenBank/DDBJ databases">
        <title>Complete sequence of Vibrio fischeri strain MJ11.</title>
        <authorList>
            <person name="Mandel M.J."/>
            <person name="Stabb E.V."/>
            <person name="Ruby E.G."/>
            <person name="Ferriera S."/>
            <person name="Johnson J."/>
            <person name="Kravitz S."/>
            <person name="Beeson K."/>
            <person name="Sutton G."/>
            <person name="Rogers Y.-H."/>
            <person name="Friedman R."/>
            <person name="Frazier M."/>
            <person name="Venter J.C."/>
        </authorList>
    </citation>
    <scope>NUCLEOTIDE SEQUENCE [LARGE SCALE GENOMIC DNA]</scope>
    <source>
        <strain>MJ11</strain>
    </source>
</reference>
<organism>
    <name type="scientific">Aliivibrio fischeri (strain MJ11)</name>
    <name type="common">Vibrio fischeri</name>
    <dbReference type="NCBI Taxonomy" id="388396"/>
    <lineage>
        <taxon>Bacteria</taxon>
        <taxon>Pseudomonadati</taxon>
        <taxon>Pseudomonadota</taxon>
        <taxon>Gammaproteobacteria</taxon>
        <taxon>Vibrionales</taxon>
        <taxon>Vibrionaceae</taxon>
        <taxon>Aliivibrio</taxon>
    </lineage>
</organism>
<evidence type="ECO:0000255" key="1">
    <source>
        <dbReference type="HAMAP-Rule" id="MF_00774"/>
    </source>
</evidence>
<proteinExistence type="inferred from homology"/>
<protein>
    <recommendedName>
        <fullName evidence="1">Acyl transferase</fullName>
        <shortName evidence="1">ACT</shortName>
        <ecNumber evidence="1">2.3.1.-</ecNumber>
    </recommendedName>
    <alternativeName>
        <fullName evidence="1">C14ACP-TE</fullName>
    </alternativeName>
    <alternativeName>
        <fullName evidence="1">Myristoyl-ACP-specific thioesterase</fullName>
    </alternativeName>
</protein>
<keyword id="KW-0012">Acyltransferase</keyword>
<keyword id="KW-0455">Luminescence</keyword>
<keyword id="KW-0808">Transferase</keyword>
<feature type="chain" id="PRO_1000200690" description="Acyl transferase">
    <location>
        <begin position="1"/>
        <end position="307"/>
    </location>
</feature>
<feature type="active site" description="Charge relay system" evidence="1">
    <location>
        <position position="116"/>
    </location>
</feature>
<feature type="active site" description="Charge relay system" evidence="1">
    <location>
        <position position="213"/>
    </location>
</feature>
<feature type="active site" description="Charge relay system" evidence="1">
    <location>
        <position position="243"/>
    </location>
</feature>
<accession>B5EV70</accession>
<comment type="function">
    <text evidence="1">Acyl transferase is part of the fatty acid reductase system required for aldehyde biosynthesis; it produces fatty acids for the luminescent reaction.</text>
</comment>
<comment type="pathway">
    <text evidence="1">Lipid metabolism; fatty acid reduction for biolumincescence.</text>
</comment>
<comment type="similarity">
    <text evidence="1">Belongs to the LuxD family.</text>
</comment>
<name>LUXD_ALIFM</name>